<dbReference type="EMBL" id="AY596297">
    <property type="protein sequence ID" value="AAV48181.1"/>
    <property type="molecule type" value="Genomic_DNA"/>
</dbReference>
<dbReference type="RefSeq" id="WP_004963592.1">
    <property type="nucleotide sequence ID" value="NZ_CP039138.1"/>
</dbReference>
<dbReference type="SMR" id="Q5UX22"/>
<dbReference type="STRING" id="272569.rrnAC3512"/>
<dbReference type="PaxDb" id="272569-rrnAC3512"/>
<dbReference type="EnsemblBacteria" id="AAV48181">
    <property type="protein sequence ID" value="AAV48181"/>
    <property type="gene ID" value="rrnAC3512"/>
</dbReference>
<dbReference type="KEGG" id="hma:rrnAC3512"/>
<dbReference type="PATRIC" id="fig|272569.17.peg.4018"/>
<dbReference type="eggNOG" id="arCOG04107">
    <property type="taxonomic scope" value="Archaea"/>
</dbReference>
<dbReference type="HOGENOM" id="CLU_033458_0_2_2"/>
<dbReference type="Proteomes" id="UP000001169">
    <property type="component" value="Chromosome I"/>
</dbReference>
<dbReference type="GO" id="GO:0043022">
    <property type="term" value="F:ribosome binding"/>
    <property type="evidence" value="ECO:0007669"/>
    <property type="project" value="TreeGrafter"/>
</dbReference>
<dbReference type="GO" id="GO:0003723">
    <property type="term" value="F:RNA binding"/>
    <property type="evidence" value="ECO:0007669"/>
    <property type="project" value="UniProtKB-UniRule"/>
</dbReference>
<dbReference type="GO" id="GO:0003743">
    <property type="term" value="F:translation initiation factor activity"/>
    <property type="evidence" value="ECO:0007669"/>
    <property type="project" value="UniProtKB-UniRule"/>
</dbReference>
<dbReference type="CDD" id="cd04452">
    <property type="entry name" value="S1_IF2_alpha"/>
    <property type="match status" value="1"/>
</dbReference>
<dbReference type="FunFam" id="2.40.50.140:FF:000103">
    <property type="entry name" value="protein RRP5 homolog"/>
    <property type="match status" value="1"/>
</dbReference>
<dbReference type="FunFam" id="1.10.150.190:FF:000006">
    <property type="entry name" value="Translation initiation factor 2 subunit alpha"/>
    <property type="match status" value="1"/>
</dbReference>
<dbReference type="FunFam" id="3.30.70.1130:FF:000002">
    <property type="entry name" value="Translation initiation factor 2 subunit alpha"/>
    <property type="match status" value="1"/>
</dbReference>
<dbReference type="Gene3D" id="3.30.70.1130">
    <property type="entry name" value="EIF_2_alpha"/>
    <property type="match status" value="1"/>
</dbReference>
<dbReference type="Gene3D" id="2.40.50.140">
    <property type="entry name" value="Nucleic acid-binding proteins"/>
    <property type="match status" value="1"/>
</dbReference>
<dbReference type="Gene3D" id="1.10.150.190">
    <property type="entry name" value="Translation initiation factor 2, subunit 1, domain 2"/>
    <property type="match status" value="1"/>
</dbReference>
<dbReference type="HAMAP" id="MF_00231">
    <property type="entry name" value="eIF_2_alpha"/>
    <property type="match status" value="1"/>
</dbReference>
<dbReference type="InterPro" id="IPR012340">
    <property type="entry name" value="NA-bd_OB-fold"/>
</dbReference>
<dbReference type="InterPro" id="IPR003029">
    <property type="entry name" value="S1_domain"/>
</dbReference>
<dbReference type="InterPro" id="IPR044126">
    <property type="entry name" value="S1_IF2_alpha"/>
</dbReference>
<dbReference type="InterPro" id="IPR022964">
    <property type="entry name" value="TIF2_asu_arc"/>
</dbReference>
<dbReference type="InterPro" id="IPR024055">
    <property type="entry name" value="TIF2_asu_C"/>
</dbReference>
<dbReference type="InterPro" id="IPR024054">
    <property type="entry name" value="TIF2_asu_middle_sf"/>
</dbReference>
<dbReference type="InterPro" id="IPR011488">
    <property type="entry name" value="TIF_2_asu"/>
</dbReference>
<dbReference type="NCBIfam" id="NF003064">
    <property type="entry name" value="PRK03987.1-4"/>
    <property type="match status" value="1"/>
</dbReference>
<dbReference type="NCBIfam" id="NF003065">
    <property type="entry name" value="PRK03987.1-5"/>
    <property type="match status" value="1"/>
</dbReference>
<dbReference type="PANTHER" id="PTHR10602">
    <property type="entry name" value="EUKARYOTIC TRANSLATION INITIATION FACTOR 2 SUBUNIT 1"/>
    <property type="match status" value="1"/>
</dbReference>
<dbReference type="PANTHER" id="PTHR10602:SF0">
    <property type="entry name" value="EUKARYOTIC TRANSLATION INITIATION FACTOR 2 SUBUNIT 1"/>
    <property type="match status" value="1"/>
</dbReference>
<dbReference type="Pfam" id="PF07541">
    <property type="entry name" value="EIF_2_alpha"/>
    <property type="match status" value="1"/>
</dbReference>
<dbReference type="Pfam" id="PF00575">
    <property type="entry name" value="S1"/>
    <property type="match status" value="1"/>
</dbReference>
<dbReference type="SMART" id="SM00316">
    <property type="entry name" value="S1"/>
    <property type="match status" value="1"/>
</dbReference>
<dbReference type="SUPFAM" id="SSF110993">
    <property type="entry name" value="eIF-2-alpha, C-terminal domain"/>
    <property type="match status" value="1"/>
</dbReference>
<dbReference type="SUPFAM" id="SSF116742">
    <property type="entry name" value="eIF2alpha middle domain-like"/>
    <property type="match status" value="1"/>
</dbReference>
<dbReference type="SUPFAM" id="SSF50249">
    <property type="entry name" value="Nucleic acid-binding proteins"/>
    <property type="match status" value="1"/>
</dbReference>
<dbReference type="PROSITE" id="PS50126">
    <property type="entry name" value="S1"/>
    <property type="match status" value="1"/>
</dbReference>
<name>IF2A_HALMA</name>
<proteinExistence type="inferred from homology"/>
<comment type="function">
    <text evidence="1">eIF-2 functions in the early steps of protein synthesis by forming a ternary complex with GTP and initiator tRNA.</text>
</comment>
<comment type="subunit">
    <text evidence="1">Heterotrimer composed of an alpha, a beta and a gamma chain.</text>
</comment>
<comment type="similarity">
    <text evidence="1">Belongs to the eIF-2-alpha family.</text>
</comment>
<reference key="1">
    <citation type="journal article" date="2004" name="Genome Res.">
        <title>Genome sequence of Haloarcula marismortui: a halophilic archaeon from the Dead Sea.</title>
        <authorList>
            <person name="Baliga N.S."/>
            <person name="Bonneau R."/>
            <person name="Facciotti M.T."/>
            <person name="Pan M."/>
            <person name="Glusman G."/>
            <person name="Deutsch E.W."/>
            <person name="Shannon P."/>
            <person name="Chiu Y."/>
            <person name="Weng R.S."/>
            <person name="Gan R.R."/>
            <person name="Hung P."/>
            <person name="Date S.V."/>
            <person name="Marcotte E."/>
            <person name="Hood L."/>
            <person name="Ng W.V."/>
        </authorList>
    </citation>
    <scope>NUCLEOTIDE SEQUENCE [LARGE SCALE GENOMIC DNA]</scope>
    <source>
        <strain>ATCC 43049 / DSM 3752 / JCM 8966 / VKM B-1809</strain>
    </source>
</reference>
<protein>
    <recommendedName>
        <fullName evidence="1">Translation initiation factor 2 subunit alpha</fullName>
    </recommendedName>
    <alternativeName>
        <fullName evidence="1">aIF2-alpha</fullName>
    </alternativeName>
    <alternativeName>
        <fullName evidence="1">eIF-2-alpha</fullName>
    </alternativeName>
</protein>
<feature type="chain" id="PRO_0000137392" description="Translation initiation factor 2 subunit alpha">
    <location>
        <begin position="1"/>
        <end position="266"/>
    </location>
</feature>
<feature type="domain" description="S1 motif" evidence="1">
    <location>
        <begin position="10"/>
        <end position="81"/>
    </location>
</feature>
<feature type="region of interest" description="Disordered" evidence="2">
    <location>
        <begin position="233"/>
        <end position="266"/>
    </location>
</feature>
<feature type="compositionally biased region" description="Basic and acidic residues" evidence="2">
    <location>
        <begin position="240"/>
        <end position="249"/>
    </location>
</feature>
<feature type="compositionally biased region" description="Basic and acidic residues" evidence="2">
    <location>
        <begin position="257"/>
        <end position="266"/>
    </location>
</feature>
<sequence length="266" mass="29614">MKYSGWPEPGELVVGKIDEIEDFGVFVDLDEYEGKRGLCHISEVASGWIKNVRDHVNEGQTVVAKVLDVDESAQQIDLSIKDVNDHQRKEKIQEWKNEQKADNWMELAFGEDLDDETYAAIANELLAEFGSMYDGFESAAIHGKDALEDVDLSEEEIDAIVQTARNNVSVPYVQVTGYVDLSCPESDGVDIIKEALQAAEGNGEVPDEIELEVTYVGSPEYRIQVQAPDYKTAEDALEESADRAAKVVEQHGGSGQFHRERSEDDE</sequence>
<gene>
    <name evidence="1" type="primary">eif2a</name>
    <name type="ordered locus">rrnAC3512</name>
</gene>
<accession>Q5UX22</accession>
<organism>
    <name type="scientific">Haloarcula marismortui (strain ATCC 43049 / DSM 3752 / JCM 8966 / VKM B-1809)</name>
    <name type="common">Halobacterium marismortui</name>
    <dbReference type="NCBI Taxonomy" id="272569"/>
    <lineage>
        <taxon>Archaea</taxon>
        <taxon>Methanobacteriati</taxon>
        <taxon>Methanobacteriota</taxon>
        <taxon>Stenosarchaea group</taxon>
        <taxon>Halobacteria</taxon>
        <taxon>Halobacteriales</taxon>
        <taxon>Haloarculaceae</taxon>
        <taxon>Haloarcula</taxon>
    </lineage>
</organism>
<keyword id="KW-0396">Initiation factor</keyword>
<keyword id="KW-0648">Protein biosynthesis</keyword>
<keyword id="KW-1185">Reference proteome</keyword>
<keyword id="KW-0694">RNA-binding</keyword>
<evidence type="ECO:0000255" key="1">
    <source>
        <dbReference type="HAMAP-Rule" id="MF_00231"/>
    </source>
</evidence>
<evidence type="ECO:0000256" key="2">
    <source>
        <dbReference type="SAM" id="MobiDB-lite"/>
    </source>
</evidence>